<organism>
    <name type="scientific">Parasynechococcus marenigrum (strain WH8102)</name>
    <dbReference type="NCBI Taxonomy" id="84588"/>
    <lineage>
        <taxon>Bacteria</taxon>
        <taxon>Bacillati</taxon>
        <taxon>Cyanobacteriota</taxon>
        <taxon>Cyanophyceae</taxon>
        <taxon>Synechococcales</taxon>
        <taxon>Prochlorococcaceae</taxon>
        <taxon>Parasynechococcus</taxon>
        <taxon>Parasynechococcus marenigrum</taxon>
    </lineage>
</organism>
<evidence type="ECO:0000255" key="1">
    <source>
        <dbReference type="HAMAP-Rule" id="MF_01019"/>
    </source>
</evidence>
<reference key="1">
    <citation type="journal article" date="2003" name="Nature">
        <title>The genome of a motile marine Synechococcus.</title>
        <authorList>
            <person name="Palenik B."/>
            <person name="Brahamsha B."/>
            <person name="Larimer F.W."/>
            <person name="Land M.L."/>
            <person name="Hauser L."/>
            <person name="Chain P."/>
            <person name="Lamerdin J.E."/>
            <person name="Regala W."/>
            <person name="Allen E.E."/>
            <person name="McCarren J."/>
            <person name="Paulsen I.T."/>
            <person name="Dufresne A."/>
            <person name="Partensky F."/>
            <person name="Webb E.A."/>
            <person name="Waterbury J."/>
        </authorList>
    </citation>
    <scope>NUCLEOTIDE SEQUENCE [LARGE SCALE GENOMIC DNA]</scope>
    <source>
        <strain>WH8102</strain>
    </source>
</reference>
<proteinExistence type="inferred from homology"/>
<comment type="catalytic activity">
    <reaction evidence="1">
        <text>1-(5-phospho-beta-D-ribosyl)-ATP + H2O = 1-(5-phospho-beta-D-ribosyl)-5'-AMP + diphosphate + H(+)</text>
        <dbReference type="Rhea" id="RHEA:22828"/>
        <dbReference type="ChEBI" id="CHEBI:15377"/>
        <dbReference type="ChEBI" id="CHEBI:15378"/>
        <dbReference type="ChEBI" id="CHEBI:33019"/>
        <dbReference type="ChEBI" id="CHEBI:59457"/>
        <dbReference type="ChEBI" id="CHEBI:73183"/>
        <dbReference type="EC" id="3.6.1.31"/>
    </reaction>
</comment>
<comment type="catalytic activity">
    <reaction evidence="1">
        <text>1-(5-phospho-beta-D-ribosyl)-5'-AMP + H2O = 1-(5-phospho-beta-D-ribosyl)-5-[(5-phospho-beta-D-ribosylamino)methylideneamino]imidazole-4-carboxamide</text>
        <dbReference type="Rhea" id="RHEA:20049"/>
        <dbReference type="ChEBI" id="CHEBI:15377"/>
        <dbReference type="ChEBI" id="CHEBI:58435"/>
        <dbReference type="ChEBI" id="CHEBI:59457"/>
        <dbReference type="EC" id="3.5.4.19"/>
    </reaction>
</comment>
<comment type="pathway">
    <text evidence="1">Amino-acid biosynthesis; L-histidine biosynthesis; L-histidine from 5-phospho-alpha-D-ribose 1-diphosphate: step 2/9.</text>
</comment>
<comment type="pathway">
    <text evidence="1">Amino-acid biosynthesis; L-histidine biosynthesis; L-histidine from 5-phospho-alpha-D-ribose 1-diphosphate: step 3/9.</text>
</comment>
<comment type="subcellular location">
    <subcellularLocation>
        <location evidence="1">Cytoplasm</location>
    </subcellularLocation>
</comment>
<comment type="similarity">
    <text evidence="1">In the N-terminal section; belongs to the PRA-CH family.</text>
</comment>
<comment type="similarity">
    <text evidence="1">In the C-terminal section; belongs to the PRA-PH family.</text>
</comment>
<gene>
    <name evidence="1" type="primary">hisI</name>
    <name evidence="1" type="synonym">hisIE</name>
    <name type="ordered locus">SYNW1505</name>
</gene>
<dbReference type="EC" id="3.5.4.19" evidence="1"/>
<dbReference type="EC" id="3.6.1.31" evidence="1"/>
<dbReference type="EMBL" id="BX569693">
    <property type="protein sequence ID" value="CAE08020.1"/>
    <property type="molecule type" value="Genomic_DNA"/>
</dbReference>
<dbReference type="RefSeq" id="WP_011128369.1">
    <property type="nucleotide sequence ID" value="NC_005070.1"/>
</dbReference>
<dbReference type="SMR" id="Q7U635"/>
<dbReference type="STRING" id="84588.SYNW1505"/>
<dbReference type="KEGG" id="syw:SYNW1505"/>
<dbReference type="eggNOG" id="COG0139">
    <property type="taxonomic scope" value="Bacteria"/>
</dbReference>
<dbReference type="eggNOG" id="COG0140">
    <property type="taxonomic scope" value="Bacteria"/>
</dbReference>
<dbReference type="HOGENOM" id="CLU_048577_3_1_3"/>
<dbReference type="UniPathway" id="UPA00031">
    <property type="reaction ID" value="UER00007"/>
</dbReference>
<dbReference type="UniPathway" id="UPA00031">
    <property type="reaction ID" value="UER00008"/>
</dbReference>
<dbReference type="Proteomes" id="UP000001422">
    <property type="component" value="Chromosome"/>
</dbReference>
<dbReference type="GO" id="GO:0005737">
    <property type="term" value="C:cytoplasm"/>
    <property type="evidence" value="ECO:0007669"/>
    <property type="project" value="UniProtKB-SubCell"/>
</dbReference>
<dbReference type="GO" id="GO:0005524">
    <property type="term" value="F:ATP binding"/>
    <property type="evidence" value="ECO:0007669"/>
    <property type="project" value="UniProtKB-KW"/>
</dbReference>
<dbReference type="GO" id="GO:0004635">
    <property type="term" value="F:phosphoribosyl-AMP cyclohydrolase activity"/>
    <property type="evidence" value="ECO:0007669"/>
    <property type="project" value="UniProtKB-UniRule"/>
</dbReference>
<dbReference type="GO" id="GO:0004636">
    <property type="term" value="F:phosphoribosyl-ATP diphosphatase activity"/>
    <property type="evidence" value="ECO:0007669"/>
    <property type="project" value="UniProtKB-UniRule"/>
</dbReference>
<dbReference type="GO" id="GO:0000105">
    <property type="term" value="P:L-histidine biosynthetic process"/>
    <property type="evidence" value="ECO:0007669"/>
    <property type="project" value="UniProtKB-UniRule"/>
</dbReference>
<dbReference type="CDD" id="cd11534">
    <property type="entry name" value="NTP-PPase_HisIE_like"/>
    <property type="match status" value="1"/>
</dbReference>
<dbReference type="FunFam" id="3.10.20.810:FF:000001">
    <property type="entry name" value="Histidine biosynthesis bifunctional protein HisIE"/>
    <property type="match status" value="1"/>
</dbReference>
<dbReference type="Gene3D" id="1.10.287.1080">
    <property type="entry name" value="MazG-like"/>
    <property type="match status" value="1"/>
</dbReference>
<dbReference type="Gene3D" id="3.10.20.810">
    <property type="entry name" value="Phosphoribosyl-AMP cyclohydrolase"/>
    <property type="match status" value="1"/>
</dbReference>
<dbReference type="HAMAP" id="MF_01020">
    <property type="entry name" value="HisE"/>
    <property type="match status" value="1"/>
</dbReference>
<dbReference type="HAMAP" id="MF_01021">
    <property type="entry name" value="HisI"/>
    <property type="match status" value="1"/>
</dbReference>
<dbReference type="HAMAP" id="MF_01019">
    <property type="entry name" value="HisIE"/>
    <property type="match status" value="1"/>
</dbReference>
<dbReference type="InterPro" id="IPR023019">
    <property type="entry name" value="His_synth_HisIE"/>
</dbReference>
<dbReference type="InterPro" id="IPR008179">
    <property type="entry name" value="HisE"/>
</dbReference>
<dbReference type="InterPro" id="IPR026660">
    <property type="entry name" value="PRA-CH"/>
</dbReference>
<dbReference type="InterPro" id="IPR021130">
    <property type="entry name" value="PRib-ATP_PPHydrolase-like"/>
</dbReference>
<dbReference type="InterPro" id="IPR002496">
    <property type="entry name" value="PRib_AMP_CycHydrolase_dom"/>
</dbReference>
<dbReference type="InterPro" id="IPR038019">
    <property type="entry name" value="PRib_AMP_CycHydrolase_sf"/>
</dbReference>
<dbReference type="NCBIfam" id="TIGR03188">
    <property type="entry name" value="histidine_hisI"/>
    <property type="match status" value="1"/>
</dbReference>
<dbReference type="NCBIfam" id="NF000768">
    <property type="entry name" value="PRK00051.1"/>
    <property type="match status" value="1"/>
</dbReference>
<dbReference type="NCBIfam" id="NF002747">
    <property type="entry name" value="PRK02759.1"/>
    <property type="match status" value="1"/>
</dbReference>
<dbReference type="PANTHER" id="PTHR42945">
    <property type="entry name" value="HISTIDINE BIOSYNTHESIS BIFUNCTIONAL PROTEIN"/>
    <property type="match status" value="1"/>
</dbReference>
<dbReference type="PANTHER" id="PTHR42945:SF1">
    <property type="entry name" value="HISTIDINE BIOSYNTHESIS BIFUNCTIONAL PROTEIN HIS7"/>
    <property type="match status" value="1"/>
</dbReference>
<dbReference type="Pfam" id="PF01502">
    <property type="entry name" value="PRA-CH"/>
    <property type="match status" value="1"/>
</dbReference>
<dbReference type="Pfam" id="PF01503">
    <property type="entry name" value="PRA-PH"/>
    <property type="match status" value="1"/>
</dbReference>
<dbReference type="SUPFAM" id="SSF101386">
    <property type="entry name" value="all-alpha NTP pyrophosphatases"/>
    <property type="match status" value="1"/>
</dbReference>
<dbReference type="SUPFAM" id="SSF141734">
    <property type="entry name" value="HisI-like"/>
    <property type="match status" value="1"/>
</dbReference>
<name>HIS2_PARMW</name>
<sequence length="222" mass="24704">MQPLSPAFIDQLRFNEAGLIPAIAQDWLDGAVLMVAWMNRESIQQTLNSGEAHYWSRSRQELWHKGATSGHTQTLRSIRYDCDADVLLLTIEQRGDIACHTGARSCFYEGGDQRSDGGSNALSPPADACTELFRVIESRRDNPEEGSYTNKLLEGGDNKILKKIGEESAEFVMACKDDNPEEIAGEAADILFHMQVALAHHGVSWRQVQEVLAARRGAPRRH</sequence>
<protein>
    <recommendedName>
        <fullName evidence="1">Histidine biosynthesis bifunctional protein HisIE</fullName>
    </recommendedName>
    <domain>
        <recommendedName>
            <fullName evidence="1">Phosphoribosyl-AMP cyclohydrolase</fullName>
            <shortName evidence="1">PRA-CH</shortName>
            <ecNumber evidence="1">3.5.4.19</ecNumber>
        </recommendedName>
    </domain>
    <domain>
        <recommendedName>
            <fullName evidence="1">Phosphoribosyl-ATP pyrophosphatase</fullName>
            <shortName evidence="1">PRA-PH</shortName>
            <ecNumber evidence="1">3.6.1.31</ecNumber>
        </recommendedName>
    </domain>
</protein>
<keyword id="KW-0028">Amino-acid biosynthesis</keyword>
<keyword id="KW-0067">ATP-binding</keyword>
<keyword id="KW-0963">Cytoplasm</keyword>
<keyword id="KW-0368">Histidine biosynthesis</keyword>
<keyword id="KW-0378">Hydrolase</keyword>
<keyword id="KW-0511">Multifunctional enzyme</keyword>
<keyword id="KW-0547">Nucleotide-binding</keyword>
<accession>Q7U635</accession>
<feature type="chain" id="PRO_0000136439" description="Histidine biosynthesis bifunctional protein HisIE">
    <location>
        <begin position="1"/>
        <end position="222"/>
    </location>
</feature>
<feature type="region of interest" description="Phosphoribosyl-AMP cyclohydrolase">
    <location>
        <begin position="1"/>
        <end position="128"/>
    </location>
</feature>
<feature type="region of interest" description="Phosphoribosyl-ATP pyrophosphohydrolase">
    <location>
        <begin position="129"/>
        <end position="222"/>
    </location>
</feature>